<sequence length="61" mass="6854">MAKLQIKLVRSVIGTTPNQKKNVEALGLRKREQVVVKEDNAQTRGMINKVSHLLEVTEIAE</sequence>
<organism>
    <name type="scientific">Clostridioides difficile (strain 630)</name>
    <name type="common">Peptoclostridium difficile</name>
    <dbReference type="NCBI Taxonomy" id="272563"/>
    <lineage>
        <taxon>Bacteria</taxon>
        <taxon>Bacillati</taxon>
        <taxon>Bacillota</taxon>
        <taxon>Clostridia</taxon>
        <taxon>Peptostreptococcales</taxon>
        <taxon>Peptostreptococcaceae</taxon>
        <taxon>Clostridioides</taxon>
    </lineage>
</organism>
<gene>
    <name evidence="1" type="primary">rpmD</name>
    <name type="ordered locus">CD630_00881</name>
    <name type="ORF">CD0088A</name>
</gene>
<proteinExistence type="inferred from homology"/>
<dbReference type="EMBL" id="AM180355">
    <property type="protein sequence ID" value="CAJ66906.1"/>
    <property type="molecule type" value="Genomic_DNA"/>
</dbReference>
<dbReference type="RefSeq" id="WP_003421137.1">
    <property type="nucleotide sequence ID" value="NZ_JAUPES010000043.1"/>
</dbReference>
<dbReference type="RefSeq" id="YP_001086555.1">
    <property type="nucleotide sequence ID" value="NC_009089.1"/>
</dbReference>
<dbReference type="SMR" id="Q18CH8"/>
<dbReference type="STRING" id="272563.CD630_00881"/>
<dbReference type="EnsemblBacteria" id="CAJ66906">
    <property type="protein sequence ID" value="CAJ66906"/>
    <property type="gene ID" value="CD630_00881"/>
</dbReference>
<dbReference type="GeneID" id="66352589"/>
<dbReference type="KEGG" id="cdf:CD630_00881"/>
<dbReference type="KEGG" id="pdc:CDIF630_00157"/>
<dbReference type="PATRIC" id="fig|272563.120.peg.97"/>
<dbReference type="eggNOG" id="COG1841">
    <property type="taxonomic scope" value="Bacteria"/>
</dbReference>
<dbReference type="OrthoDB" id="9812790at2"/>
<dbReference type="PhylomeDB" id="Q18CH8"/>
<dbReference type="BioCyc" id="PDIF272563:G12WB-145-MONOMER"/>
<dbReference type="Proteomes" id="UP000001978">
    <property type="component" value="Chromosome"/>
</dbReference>
<dbReference type="GO" id="GO:0022625">
    <property type="term" value="C:cytosolic large ribosomal subunit"/>
    <property type="evidence" value="ECO:0007669"/>
    <property type="project" value="TreeGrafter"/>
</dbReference>
<dbReference type="GO" id="GO:0003735">
    <property type="term" value="F:structural constituent of ribosome"/>
    <property type="evidence" value="ECO:0007669"/>
    <property type="project" value="InterPro"/>
</dbReference>
<dbReference type="GO" id="GO:0006412">
    <property type="term" value="P:translation"/>
    <property type="evidence" value="ECO:0007669"/>
    <property type="project" value="UniProtKB-UniRule"/>
</dbReference>
<dbReference type="CDD" id="cd01658">
    <property type="entry name" value="Ribosomal_L30"/>
    <property type="match status" value="1"/>
</dbReference>
<dbReference type="FunFam" id="3.30.1390.20:FF:000001">
    <property type="entry name" value="50S ribosomal protein L30"/>
    <property type="match status" value="1"/>
</dbReference>
<dbReference type="Gene3D" id="3.30.1390.20">
    <property type="entry name" value="Ribosomal protein L30, ferredoxin-like fold domain"/>
    <property type="match status" value="1"/>
</dbReference>
<dbReference type="HAMAP" id="MF_01371_B">
    <property type="entry name" value="Ribosomal_uL30_B"/>
    <property type="match status" value="1"/>
</dbReference>
<dbReference type="InterPro" id="IPR036919">
    <property type="entry name" value="Ribo_uL30_ferredoxin-like_sf"/>
</dbReference>
<dbReference type="InterPro" id="IPR005996">
    <property type="entry name" value="Ribosomal_uL30_bac-type"/>
</dbReference>
<dbReference type="InterPro" id="IPR016082">
    <property type="entry name" value="Ribosomal_uL30_ferredoxin-like"/>
</dbReference>
<dbReference type="NCBIfam" id="TIGR01308">
    <property type="entry name" value="rpmD_bact"/>
    <property type="match status" value="1"/>
</dbReference>
<dbReference type="PANTHER" id="PTHR15892:SF2">
    <property type="entry name" value="LARGE RIBOSOMAL SUBUNIT PROTEIN UL30M"/>
    <property type="match status" value="1"/>
</dbReference>
<dbReference type="PANTHER" id="PTHR15892">
    <property type="entry name" value="MITOCHONDRIAL RIBOSOMAL PROTEIN L30"/>
    <property type="match status" value="1"/>
</dbReference>
<dbReference type="Pfam" id="PF00327">
    <property type="entry name" value="Ribosomal_L30"/>
    <property type="match status" value="1"/>
</dbReference>
<dbReference type="PIRSF" id="PIRSF002211">
    <property type="entry name" value="Ribosomal_L30_bac-type"/>
    <property type="match status" value="1"/>
</dbReference>
<dbReference type="SUPFAM" id="SSF55129">
    <property type="entry name" value="Ribosomal protein L30p/L7e"/>
    <property type="match status" value="1"/>
</dbReference>
<feature type="chain" id="PRO_1000056031" description="Large ribosomal subunit protein uL30">
    <location>
        <begin position="1"/>
        <end position="61"/>
    </location>
</feature>
<accession>Q18CH8</accession>
<protein>
    <recommendedName>
        <fullName evidence="1">Large ribosomal subunit protein uL30</fullName>
    </recommendedName>
    <alternativeName>
        <fullName evidence="2">50S ribosomal protein L30</fullName>
    </alternativeName>
</protein>
<reference key="1">
    <citation type="journal article" date="2006" name="Nat. Genet.">
        <title>The multidrug-resistant human pathogen Clostridium difficile has a highly mobile, mosaic genome.</title>
        <authorList>
            <person name="Sebaihia M."/>
            <person name="Wren B.W."/>
            <person name="Mullany P."/>
            <person name="Fairweather N.F."/>
            <person name="Minton N."/>
            <person name="Stabler R."/>
            <person name="Thomson N.R."/>
            <person name="Roberts A.P."/>
            <person name="Cerdeno-Tarraga A.M."/>
            <person name="Wang H."/>
            <person name="Holden M.T.G."/>
            <person name="Wright A."/>
            <person name="Churcher C."/>
            <person name="Quail M.A."/>
            <person name="Baker S."/>
            <person name="Bason N."/>
            <person name="Brooks K."/>
            <person name="Chillingworth T."/>
            <person name="Cronin A."/>
            <person name="Davis P."/>
            <person name="Dowd L."/>
            <person name="Fraser A."/>
            <person name="Feltwell T."/>
            <person name="Hance Z."/>
            <person name="Holroyd S."/>
            <person name="Jagels K."/>
            <person name="Moule S."/>
            <person name="Mungall K."/>
            <person name="Price C."/>
            <person name="Rabbinowitsch E."/>
            <person name="Sharp S."/>
            <person name="Simmonds M."/>
            <person name="Stevens K."/>
            <person name="Unwin L."/>
            <person name="Whithead S."/>
            <person name="Dupuy B."/>
            <person name="Dougan G."/>
            <person name="Barrell B."/>
            <person name="Parkhill J."/>
        </authorList>
    </citation>
    <scope>NUCLEOTIDE SEQUENCE [LARGE SCALE GENOMIC DNA]</scope>
    <source>
        <strain>630</strain>
    </source>
</reference>
<comment type="subunit">
    <text evidence="1">Part of the 50S ribosomal subunit.</text>
</comment>
<comment type="similarity">
    <text evidence="1">Belongs to the universal ribosomal protein uL30 family.</text>
</comment>
<keyword id="KW-1185">Reference proteome</keyword>
<keyword id="KW-0687">Ribonucleoprotein</keyword>
<keyword id="KW-0689">Ribosomal protein</keyword>
<evidence type="ECO:0000255" key="1">
    <source>
        <dbReference type="HAMAP-Rule" id="MF_01371"/>
    </source>
</evidence>
<evidence type="ECO:0000305" key="2"/>
<name>RL30_CLOD6</name>